<name>HSLV_STAES</name>
<evidence type="ECO:0000255" key="1">
    <source>
        <dbReference type="HAMAP-Rule" id="MF_00248"/>
    </source>
</evidence>
<accession>Q8CPH1</accession>
<comment type="function">
    <text evidence="1">Protease subunit of a proteasome-like degradation complex believed to be a general protein degrading machinery.</text>
</comment>
<comment type="catalytic activity">
    <reaction evidence="1">
        <text>ATP-dependent cleavage of peptide bonds with broad specificity.</text>
        <dbReference type="EC" id="3.4.25.2"/>
    </reaction>
</comment>
<comment type="activity regulation">
    <text evidence="1">Allosterically activated by HslU binding.</text>
</comment>
<comment type="subunit">
    <text evidence="1">A double ring-shaped homohexamer of HslV is capped on each side by a ring-shaped HslU homohexamer. The assembly of the HslU/HslV complex is dependent on binding of ATP.</text>
</comment>
<comment type="subcellular location">
    <subcellularLocation>
        <location evidence="1">Cytoplasm</location>
    </subcellularLocation>
</comment>
<comment type="similarity">
    <text evidence="1">Belongs to the peptidase T1B family. HslV subfamily.</text>
</comment>
<gene>
    <name evidence="1" type="primary">hslV</name>
    <name type="ordered locus">SE_0929</name>
</gene>
<dbReference type="EC" id="3.4.25.2" evidence="1"/>
<dbReference type="EMBL" id="AE015929">
    <property type="protein sequence ID" value="AAO04526.1"/>
    <property type="molecule type" value="Genomic_DNA"/>
</dbReference>
<dbReference type="RefSeq" id="NP_764484.1">
    <property type="nucleotide sequence ID" value="NC_004461.1"/>
</dbReference>
<dbReference type="RefSeq" id="WP_001829498.1">
    <property type="nucleotide sequence ID" value="NZ_WBME01000001.1"/>
</dbReference>
<dbReference type="SMR" id="Q8CPH1"/>
<dbReference type="MEROPS" id="T01.007"/>
<dbReference type="GeneID" id="50018935"/>
<dbReference type="KEGG" id="sep:SE_0929"/>
<dbReference type="PATRIC" id="fig|176280.10.peg.904"/>
<dbReference type="eggNOG" id="COG5405">
    <property type="taxonomic scope" value="Bacteria"/>
</dbReference>
<dbReference type="HOGENOM" id="CLU_093872_1_1_9"/>
<dbReference type="OrthoDB" id="9804884at2"/>
<dbReference type="Proteomes" id="UP000001411">
    <property type="component" value="Chromosome"/>
</dbReference>
<dbReference type="GO" id="GO:0009376">
    <property type="term" value="C:HslUV protease complex"/>
    <property type="evidence" value="ECO:0007669"/>
    <property type="project" value="UniProtKB-UniRule"/>
</dbReference>
<dbReference type="GO" id="GO:0005839">
    <property type="term" value="C:proteasome core complex"/>
    <property type="evidence" value="ECO:0007669"/>
    <property type="project" value="InterPro"/>
</dbReference>
<dbReference type="GO" id="GO:0046872">
    <property type="term" value="F:metal ion binding"/>
    <property type="evidence" value="ECO:0007669"/>
    <property type="project" value="UniProtKB-KW"/>
</dbReference>
<dbReference type="GO" id="GO:0004298">
    <property type="term" value="F:threonine-type endopeptidase activity"/>
    <property type="evidence" value="ECO:0007669"/>
    <property type="project" value="UniProtKB-KW"/>
</dbReference>
<dbReference type="GO" id="GO:0051603">
    <property type="term" value="P:proteolysis involved in protein catabolic process"/>
    <property type="evidence" value="ECO:0007669"/>
    <property type="project" value="InterPro"/>
</dbReference>
<dbReference type="CDD" id="cd01913">
    <property type="entry name" value="protease_HslV"/>
    <property type="match status" value="1"/>
</dbReference>
<dbReference type="Gene3D" id="3.60.20.10">
    <property type="entry name" value="Glutamine Phosphoribosylpyrophosphate, subunit 1, domain 1"/>
    <property type="match status" value="1"/>
</dbReference>
<dbReference type="HAMAP" id="MF_00248">
    <property type="entry name" value="HslV"/>
    <property type="match status" value="1"/>
</dbReference>
<dbReference type="InterPro" id="IPR022281">
    <property type="entry name" value="ATP-dep_Prtase_HsIV_su"/>
</dbReference>
<dbReference type="InterPro" id="IPR029055">
    <property type="entry name" value="Ntn_hydrolases_N"/>
</dbReference>
<dbReference type="InterPro" id="IPR001353">
    <property type="entry name" value="Proteasome_sua/b"/>
</dbReference>
<dbReference type="InterPro" id="IPR023333">
    <property type="entry name" value="Proteasome_suB-type"/>
</dbReference>
<dbReference type="NCBIfam" id="TIGR03692">
    <property type="entry name" value="ATP_dep_HslV"/>
    <property type="match status" value="1"/>
</dbReference>
<dbReference type="NCBIfam" id="NF003964">
    <property type="entry name" value="PRK05456.1"/>
    <property type="match status" value="1"/>
</dbReference>
<dbReference type="PANTHER" id="PTHR32194:SF0">
    <property type="entry name" value="ATP-DEPENDENT PROTEASE SUBUNIT HSLV"/>
    <property type="match status" value="1"/>
</dbReference>
<dbReference type="PANTHER" id="PTHR32194">
    <property type="entry name" value="METALLOPROTEASE TLDD"/>
    <property type="match status" value="1"/>
</dbReference>
<dbReference type="Pfam" id="PF00227">
    <property type="entry name" value="Proteasome"/>
    <property type="match status" value="1"/>
</dbReference>
<dbReference type="PIRSF" id="PIRSF039093">
    <property type="entry name" value="HslV"/>
    <property type="match status" value="1"/>
</dbReference>
<dbReference type="SUPFAM" id="SSF56235">
    <property type="entry name" value="N-terminal nucleophile aminohydrolases (Ntn hydrolases)"/>
    <property type="match status" value="1"/>
</dbReference>
<dbReference type="PROSITE" id="PS51476">
    <property type="entry name" value="PROTEASOME_BETA_2"/>
    <property type="match status" value="1"/>
</dbReference>
<proteinExistence type="inferred from homology"/>
<organism>
    <name type="scientific">Staphylococcus epidermidis (strain ATCC 12228 / FDA PCI 1200)</name>
    <dbReference type="NCBI Taxonomy" id="176280"/>
    <lineage>
        <taxon>Bacteria</taxon>
        <taxon>Bacillati</taxon>
        <taxon>Bacillota</taxon>
        <taxon>Bacilli</taxon>
        <taxon>Bacillales</taxon>
        <taxon>Staphylococcaceae</taxon>
        <taxon>Staphylococcus</taxon>
    </lineage>
</organism>
<feature type="chain" id="PRO_0000148152" description="ATP-dependent protease subunit HslV">
    <location>
        <begin position="1"/>
        <end position="180"/>
    </location>
</feature>
<feature type="active site" evidence="1">
    <location>
        <position position="8"/>
    </location>
</feature>
<feature type="binding site" evidence="1">
    <location>
        <position position="165"/>
    </location>
    <ligand>
        <name>Na(+)</name>
        <dbReference type="ChEBI" id="CHEBI:29101"/>
    </ligand>
</feature>
<feature type="binding site" evidence="1">
    <location>
        <position position="168"/>
    </location>
    <ligand>
        <name>Na(+)</name>
        <dbReference type="ChEBI" id="CHEBI:29101"/>
    </ligand>
</feature>
<feature type="binding site" evidence="1">
    <location>
        <position position="171"/>
    </location>
    <ligand>
        <name>Na(+)</name>
        <dbReference type="ChEBI" id="CHEBI:29101"/>
    </ligand>
</feature>
<reference key="1">
    <citation type="journal article" date="2003" name="Mol. Microbiol.">
        <title>Genome-based analysis of virulence genes in a non-biofilm-forming Staphylococcus epidermidis strain (ATCC 12228).</title>
        <authorList>
            <person name="Zhang Y.-Q."/>
            <person name="Ren S.-X."/>
            <person name="Li H.-L."/>
            <person name="Wang Y.-X."/>
            <person name="Fu G."/>
            <person name="Yang J."/>
            <person name="Qin Z.-Q."/>
            <person name="Miao Y.-G."/>
            <person name="Wang W.-Y."/>
            <person name="Chen R.-S."/>
            <person name="Shen Y."/>
            <person name="Chen Z."/>
            <person name="Yuan Z.-H."/>
            <person name="Zhao G.-P."/>
            <person name="Qu D."/>
            <person name="Danchin A."/>
            <person name="Wen Y.-M."/>
        </authorList>
    </citation>
    <scope>NUCLEOTIDE SEQUENCE [LARGE SCALE GENOMIC DNA]</scope>
    <source>
        <strain>ATCC 12228 / FDA PCI 1200</strain>
    </source>
</reference>
<keyword id="KW-0021">Allosteric enzyme</keyword>
<keyword id="KW-0963">Cytoplasm</keyword>
<keyword id="KW-0378">Hydrolase</keyword>
<keyword id="KW-0479">Metal-binding</keyword>
<keyword id="KW-0645">Protease</keyword>
<keyword id="KW-0915">Sodium</keyword>
<keyword id="KW-0888">Threonine protease</keyword>
<sequence>MDNSLHATTIYAVRHNGEAAMAGDGQVTLGQQVIMKQTARKVRRLYEGKVLAGFAGSVADAFTLFEKFETKLQQFSGNLERAAVELAQEWRGDKQLRQLEAMLIVMNKDAILIVSGTGEVIAPDDDLIAIGSGGNYALSAGRALKRHAAQLSASEMAYESLKVAADICVFTNDNIIVETL</sequence>
<protein>
    <recommendedName>
        <fullName evidence="1">ATP-dependent protease subunit HslV</fullName>
        <ecNumber evidence="1">3.4.25.2</ecNumber>
    </recommendedName>
</protein>